<comment type="function">
    <text evidence="1">Functions in the N-end rule pathway of protein degradation where it conjugates Leu from its aminoacyl-tRNA to the N-termini of proteins containing an N-terminal aspartate or glutamate.</text>
</comment>
<comment type="catalytic activity">
    <reaction evidence="1">
        <text>N-terminal L-glutamyl-[protein] + L-leucyl-tRNA(Leu) = N-terminal L-leucyl-L-glutamyl-[protein] + tRNA(Leu) + H(+)</text>
        <dbReference type="Rhea" id="RHEA:50412"/>
        <dbReference type="Rhea" id="RHEA-COMP:9613"/>
        <dbReference type="Rhea" id="RHEA-COMP:9622"/>
        <dbReference type="Rhea" id="RHEA-COMP:12664"/>
        <dbReference type="Rhea" id="RHEA-COMP:12668"/>
        <dbReference type="ChEBI" id="CHEBI:15378"/>
        <dbReference type="ChEBI" id="CHEBI:64721"/>
        <dbReference type="ChEBI" id="CHEBI:78442"/>
        <dbReference type="ChEBI" id="CHEBI:78494"/>
        <dbReference type="ChEBI" id="CHEBI:133041"/>
        <dbReference type="EC" id="2.3.2.29"/>
    </reaction>
</comment>
<comment type="catalytic activity">
    <reaction evidence="1">
        <text>N-terminal L-aspartyl-[protein] + L-leucyl-tRNA(Leu) = N-terminal L-leucyl-L-aspartyl-[protein] + tRNA(Leu) + H(+)</text>
        <dbReference type="Rhea" id="RHEA:50420"/>
        <dbReference type="Rhea" id="RHEA-COMP:9613"/>
        <dbReference type="Rhea" id="RHEA-COMP:9622"/>
        <dbReference type="Rhea" id="RHEA-COMP:12669"/>
        <dbReference type="Rhea" id="RHEA-COMP:12674"/>
        <dbReference type="ChEBI" id="CHEBI:15378"/>
        <dbReference type="ChEBI" id="CHEBI:64720"/>
        <dbReference type="ChEBI" id="CHEBI:78442"/>
        <dbReference type="ChEBI" id="CHEBI:78494"/>
        <dbReference type="ChEBI" id="CHEBI:133042"/>
        <dbReference type="EC" id="2.3.2.29"/>
    </reaction>
</comment>
<comment type="subcellular location">
    <subcellularLocation>
        <location evidence="1">Cytoplasm</location>
    </subcellularLocation>
</comment>
<comment type="similarity">
    <text evidence="1">Belongs to the R-transferase family. Bpt subfamily.</text>
</comment>
<proteinExistence type="inferred from homology"/>
<feature type="chain" id="PRO_0000263174" description="Aspartate/glutamate leucyltransferase">
    <location>
        <begin position="1"/>
        <end position="276"/>
    </location>
</feature>
<name>BPT_BURO1</name>
<sequence>MTHPTELPLSPLSALQFYATAPYPCSYLDGRIARSQVATPSHLINSDIYTELVKAGFRRSGVFTYRPYCDGCRACVPVRVPVGEFAPTRTQRRMWKRHRALVATVSPLHYDEEHYALYMRYQSARHAGGGMDRDSRDQYEQFLLQSRINSRLVEFRDLDAPGGEPGKLRMVSMIDILGDGLSSVYTFFEPDDRHTSYGTYNILWQIEQAKSLGLPYVYLGYWIRESPKMAYKANFHPLEGLIDGRWKTLDPERIDLPPVDAALARAPLPGGHSGSG</sequence>
<protein>
    <recommendedName>
        <fullName evidence="1">Aspartate/glutamate leucyltransferase</fullName>
        <ecNumber evidence="1">2.3.2.29</ecNumber>
    </recommendedName>
</protein>
<accession>Q1BWM3</accession>
<organism>
    <name type="scientific">Burkholderia orbicola (strain AU 1054)</name>
    <dbReference type="NCBI Taxonomy" id="331271"/>
    <lineage>
        <taxon>Bacteria</taxon>
        <taxon>Pseudomonadati</taxon>
        <taxon>Pseudomonadota</taxon>
        <taxon>Betaproteobacteria</taxon>
        <taxon>Burkholderiales</taxon>
        <taxon>Burkholderiaceae</taxon>
        <taxon>Burkholderia</taxon>
        <taxon>Burkholderia cepacia complex</taxon>
        <taxon>Burkholderia orbicola</taxon>
    </lineage>
</organism>
<dbReference type="EC" id="2.3.2.29" evidence="1"/>
<dbReference type="EMBL" id="CP000378">
    <property type="protein sequence ID" value="ABF75982.1"/>
    <property type="molecule type" value="Genomic_DNA"/>
</dbReference>
<dbReference type="SMR" id="Q1BWM3"/>
<dbReference type="HOGENOM" id="CLU_077607_0_0_4"/>
<dbReference type="GO" id="GO:0005737">
    <property type="term" value="C:cytoplasm"/>
    <property type="evidence" value="ECO:0007669"/>
    <property type="project" value="UniProtKB-SubCell"/>
</dbReference>
<dbReference type="GO" id="GO:0004057">
    <property type="term" value="F:arginyl-tRNA--protein transferase activity"/>
    <property type="evidence" value="ECO:0007669"/>
    <property type="project" value="InterPro"/>
</dbReference>
<dbReference type="GO" id="GO:0008914">
    <property type="term" value="F:leucyl-tRNA--protein transferase activity"/>
    <property type="evidence" value="ECO:0007669"/>
    <property type="project" value="UniProtKB-UniRule"/>
</dbReference>
<dbReference type="GO" id="GO:0071596">
    <property type="term" value="P:ubiquitin-dependent protein catabolic process via the N-end rule pathway"/>
    <property type="evidence" value="ECO:0007669"/>
    <property type="project" value="InterPro"/>
</dbReference>
<dbReference type="HAMAP" id="MF_00689">
    <property type="entry name" value="Bpt"/>
    <property type="match status" value="1"/>
</dbReference>
<dbReference type="InterPro" id="IPR016181">
    <property type="entry name" value="Acyl_CoA_acyltransferase"/>
</dbReference>
<dbReference type="InterPro" id="IPR017138">
    <property type="entry name" value="Asp_Glu_LeuTrfase"/>
</dbReference>
<dbReference type="InterPro" id="IPR030700">
    <property type="entry name" value="N-end_Aminoacyl_Trfase"/>
</dbReference>
<dbReference type="InterPro" id="IPR007472">
    <property type="entry name" value="N-end_Aminoacyl_Trfase_C"/>
</dbReference>
<dbReference type="InterPro" id="IPR007471">
    <property type="entry name" value="N-end_Aminoacyl_Trfase_N"/>
</dbReference>
<dbReference type="NCBIfam" id="NF002341">
    <property type="entry name" value="PRK01305.1-1"/>
    <property type="match status" value="1"/>
</dbReference>
<dbReference type="NCBIfam" id="NF002342">
    <property type="entry name" value="PRK01305.1-3"/>
    <property type="match status" value="1"/>
</dbReference>
<dbReference type="NCBIfam" id="NF002346">
    <property type="entry name" value="PRK01305.2-3"/>
    <property type="match status" value="1"/>
</dbReference>
<dbReference type="PANTHER" id="PTHR21367">
    <property type="entry name" value="ARGININE-TRNA-PROTEIN TRANSFERASE 1"/>
    <property type="match status" value="1"/>
</dbReference>
<dbReference type="PANTHER" id="PTHR21367:SF1">
    <property type="entry name" value="ARGINYL-TRNA--PROTEIN TRANSFERASE 1"/>
    <property type="match status" value="1"/>
</dbReference>
<dbReference type="Pfam" id="PF04377">
    <property type="entry name" value="ATE_C"/>
    <property type="match status" value="1"/>
</dbReference>
<dbReference type="Pfam" id="PF04376">
    <property type="entry name" value="ATE_N"/>
    <property type="match status" value="1"/>
</dbReference>
<dbReference type="PIRSF" id="PIRSF037208">
    <property type="entry name" value="ATE_pro_prd"/>
    <property type="match status" value="1"/>
</dbReference>
<dbReference type="SUPFAM" id="SSF55729">
    <property type="entry name" value="Acyl-CoA N-acyltransferases (Nat)"/>
    <property type="match status" value="1"/>
</dbReference>
<evidence type="ECO:0000255" key="1">
    <source>
        <dbReference type="HAMAP-Rule" id="MF_00689"/>
    </source>
</evidence>
<keyword id="KW-0012">Acyltransferase</keyword>
<keyword id="KW-0963">Cytoplasm</keyword>
<keyword id="KW-0808">Transferase</keyword>
<gene>
    <name evidence="1" type="primary">bpt</name>
    <name type="ordered locus">Bcen_1075</name>
</gene>
<reference key="1">
    <citation type="submission" date="2006-05" db="EMBL/GenBank/DDBJ databases">
        <title>Complete sequence of chromosome 1 of Burkholderia cenocepacia AU 1054.</title>
        <authorList>
            <consortium name="US DOE Joint Genome Institute"/>
            <person name="Copeland A."/>
            <person name="Lucas S."/>
            <person name="Lapidus A."/>
            <person name="Barry K."/>
            <person name="Detter J.C."/>
            <person name="Glavina del Rio T."/>
            <person name="Hammon N."/>
            <person name="Israni S."/>
            <person name="Dalin E."/>
            <person name="Tice H."/>
            <person name="Pitluck S."/>
            <person name="Chain P."/>
            <person name="Malfatti S."/>
            <person name="Shin M."/>
            <person name="Vergez L."/>
            <person name="Schmutz J."/>
            <person name="Larimer F."/>
            <person name="Land M."/>
            <person name="Hauser L."/>
            <person name="Kyrpides N."/>
            <person name="Lykidis A."/>
            <person name="LiPuma J.J."/>
            <person name="Konstantinidis K."/>
            <person name="Tiedje J.M."/>
            <person name="Richardson P."/>
        </authorList>
    </citation>
    <scope>NUCLEOTIDE SEQUENCE [LARGE SCALE GENOMIC DNA]</scope>
    <source>
        <strain>AU 1054</strain>
    </source>
</reference>